<evidence type="ECO:0000255" key="1"/>
<evidence type="ECO:0000255" key="2">
    <source>
        <dbReference type="PROSITE-ProRule" id="PRU00521"/>
    </source>
</evidence>
<evidence type="ECO:0000269" key="3">
    <source>
    </source>
</evidence>
<reference key="1">
    <citation type="journal article" date="2004" name="Endocrinology">
        <title>Laser-captured single digoxigenin-labeled neurons of gonadotropin-releasing hormone types reveal a novel G protein-coupled receptor (Gpr54) during maturation in cichlid fish.</title>
        <authorList>
            <person name="Parhar I.S."/>
            <person name="Ogawa S."/>
            <person name="Sakuma Y."/>
        </authorList>
    </citation>
    <scope>NUCLEOTIDE SEQUENCE [MRNA]</scope>
    <scope>TISSUE SPECIFICITY</scope>
    <scope>POSSIBLE FUNCTION</scope>
    <source>
        <tissue>Embryonic brain</tissue>
    </source>
</reference>
<name>GPR54_ORENI</name>
<dbReference type="EMBL" id="AB162143">
    <property type="protein sequence ID" value="BAD34454.1"/>
    <property type="molecule type" value="mRNA"/>
</dbReference>
<dbReference type="RefSeq" id="NP_001266708.1">
    <property type="nucleotide sequence ID" value="NM_001279779.1"/>
</dbReference>
<dbReference type="SMR" id="Q6BD04"/>
<dbReference type="FunCoup" id="Q6BD04">
    <property type="interactions" value="65"/>
</dbReference>
<dbReference type="STRING" id="8128.ENSONIP00000011710"/>
<dbReference type="GlyCosmos" id="Q6BD04">
    <property type="glycosylation" value="3 sites, No reported glycans"/>
</dbReference>
<dbReference type="GeneID" id="100534519"/>
<dbReference type="KEGG" id="onl:100534519"/>
<dbReference type="CTD" id="561898"/>
<dbReference type="eggNOG" id="KOG3656">
    <property type="taxonomic scope" value="Eukaryota"/>
</dbReference>
<dbReference type="InParanoid" id="Q6BD04"/>
<dbReference type="OrthoDB" id="2132067at2759"/>
<dbReference type="Proteomes" id="UP000005207">
    <property type="component" value="Unplaced"/>
</dbReference>
<dbReference type="GO" id="GO:0005886">
    <property type="term" value="C:plasma membrane"/>
    <property type="evidence" value="ECO:0007669"/>
    <property type="project" value="UniProtKB-SubCell"/>
</dbReference>
<dbReference type="GO" id="GO:0004930">
    <property type="term" value="F:G protein-coupled receptor activity"/>
    <property type="evidence" value="ECO:0007669"/>
    <property type="project" value="UniProtKB-KW"/>
</dbReference>
<dbReference type="CDD" id="cd15095">
    <property type="entry name" value="7tmA_KiSS1R"/>
    <property type="match status" value="1"/>
</dbReference>
<dbReference type="FunFam" id="1.20.1070.10:FF:000171">
    <property type="entry name" value="KISS1 receptor b"/>
    <property type="match status" value="1"/>
</dbReference>
<dbReference type="Gene3D" id="1.20.1070.10">
    <property type="entry name" value="Rhodopsin 7-helix transmembrane proteins"/>
    <property type="match status" value="1"/>
</dbReference>
<dbReference type="InterPro" id="IPR000276">
    <property type="entry name" value="GPCR_Rhodpsn"/>
</dbReference>
<dbReference type="InterPro" id="IPR017452">
    <property type="entry name" value="GPCR_Rhodpsn_7TM"/>
</dbReference>
<dbReference type="InterPro" id="IPR008103">
    <property type="entry name" value="KiSS_1_rcpt"/>
</dbReference>
<dbReference type="PANTHER" id="PTHR45695:SF23">
    <property type="entry name" value="GALANIN-LIKE G-PROTEIN COUPLED RECEPTOR NPR-9"/>
    <property type="match status" value="1"/>
</dbReference>
<dbReference type="PANTHER" id="PTHR45695">
    <property type="entry name" value="LEUCOKININ RECEPTOR-RELATED"/>
    <property type="match status" value="1"/>
</dbReference>
<dbReference type="Pfam" id="PF00001">
    <property type="entry name" value="7tm_1"/>
    <property type="match status" value="1"/>
</dbReference>
<dbReference type="PRINTS" id="PR00237">
    <property type="entry name" value="GPCRRHODOPSN"/>
</dbReference>
<dbReference type="PRINTS" id="PR01728">
    <property type="entry name" value="KISS1RECEPTR"/>
</dbReference>
<dbReference type="SUPFAM" id="SSF81321">
    <property type="entry name" value="Family A G protein-coupled receptor-like"/>
    <property type="match status" value="1"/>
</dbReference>
<dbReference type="PROSITE" id="PS50262">
    <property type="entry name" value="G_PROTEIN_RECEP_F1_2"/>
    <property type="match status" value="1"/>
</dbReference>
<comment type="function">
    <text>Receptor speculated to be essential for sexual development. May regulate gonadotropin-releasing hormone (GnRH) secretion. The receptor expression could be a 'stop signal' for GnRH1, GnRH2, and GnRH3 neuronal migration, leading to suppression of cell growth and modulation of GnRH secretion, which is important for normal sexual development.</text>
</comment>
<comment type="subcellular location">
    <subcellularLocation>
        <location>Cell membrane</location>
        <topology>Multi-pass membrane protein</topology>
    </subcellularLocation>
</comment>
<comment type="tissue specificity">
    <text evidence="3">Expressed in a significantly high percentage (45-60%) of mature GnRH1, GnRH2, and GnRH3 neurons and in immature GnRH3 neurons, which had migrated to the vicinity of their final locations in the brain. Only 5% of immature GnRH1 and GnRH2 neurons have receptor transcripts.</text>
</comment>
<comment type="similarity">
    <text evidence="2">Belongs to the G-protein coupled receptor 1 family.</text>
</comment>
<keyword id="KW-1003">Cell membrane</keyword>
<keyword id="KW-1015">Disulfide bond</keyword>
<keyword id="KW-0297">G-protein coupled receptor</keyword>
<keyword id="KW-0325">Glycoprotein</keyword>
<keyword id="KW-0472">Membrane</keyword>
<keyword id="KW-0675">Receptor</keyword>
<keyword id="KW-1185">Reference proteome</keyword>
<keyword id="KW-0807">Transducer</keyword>
<keyword id="KW-0812">Transmembrane</keyword>
<keyword id="KW-1133">Transmembrane helix</keyword>
<accession>Q6BD04</accession>
<proteinExistence type="evidence at transcript level"/>
<organism>
    <name type="scientific">Oreochromis niloticus</name>
    <name type="common">Nile tilapia</name>
    <name type="synonym">Tilapia nilotica</name>
    <dbReference type="NCBI Taxonomy" id="8128"/>
    <lineage>
        <taxon>Eukaryota</taxon>
        <taxon>Metazoa</taxon>
        <taxon>Chordata</taxon>
        <taxon>Craniata</taxon>
        <taxon>Vertebrata</taxon>
        <taxon>Euteleostomi</taxon>
        <taxon>Actinopterygii</taxon>
        <taxon>Neopterygii</taxon>
        <taxon>Teleostei</taxon>
        <taxon>Neoteleostei</taxon>
        <taxon>Acanthomorphata</taxon>
        <taxon>Ovalentaria</taxon>
        <taxon>Cichlomorphae</taxon>
        <taxon>Cichliformes</taxon>
        <taxon>Cichlidae</taxon>
        <taxon>African cichlids</taxon>
        <taxon>Pseudocrenilabrinae</taxon>
        <taxon>Oreochromini</taxon>
        <taxon>Oreochromis</taxon>
    </lineage>
</organism>
<sequence>MYSSEELWNSTEQVWINGSGTNFSLGRHEDDEEEEGDKHPFFTDAWLVPLFFSLIMLVGLVGNSLVIYVISKHRQMRTATNFYIANLAATDIIFLVCCVPFTATLYPLPGWIFGNFMCKFVAFLQQVTVQATCITLTAMSGDRCYVTVYPLKSLRHRTPKVAMIVSICIWIGSFVLSTPILMYQRIEEGYWYGPRQYCMERFPSKTHERAFILYQFIAAYLLPVLTISFCYTLMVKRVGQPTVEPVDNNYQVNLLSERTISIRSKVSKMVVVIVLLFAICWGPIQIFVLFQSFYPNYQPNYATYKIKTWANCMSYANSSVNPIVYGFMGASFQKSFRKTFPFLFKHKVRDSSMASRTANAEIKFVAAEEGNNNNAVN</sequence>
<protein>
    <recommendedName>
        <fullName>G-protein coupled receptor 54</fullName>
    </recommendedName>
</protein>
<gene>
    <name type="primary">gpr54</name>
</gene>
<feature type="chain" id="PRO_0000069698" description="G-protein coupled receptor 54">
    <location>
        <begin position="1"/>
        <end position="377"/>
    </location>
</feature>
<feature type="topological domain" description="Extracellular" evidence="1">
    <location>
        <begin position="1"/>
        <end position="49"/>
    </location>
</feature>
<feature type="transmembrane region" description="Helical; Name=1" evidence="1">
    <location>
        <begin position="50"/>
        <end position="70"/>
    </location>
</feature>
<feature type="topological domain" description="Cytoplasmic" evidence="1">
    <location>
        <begin position="71"/>
        <end position="91"/>
    </location>
</feature>
<feature type="transmembrane region" description="Helical; Name=2" evidence="1">
    <location>
        <begin position="92"/>
        <end position="112"/>
    </location>
</feature>
<feature type="topological domain" description="Extracellular" evidence="1">
    <location>
        <begin position="113"/>
        <end position="119"/>
    </location>
</feature>
<feature type="transmembrane region" description="Helical; Name=3" evidence="1">
    <location>
        <begin position="120"/>
        <end position="140"/>
    </location>
</feature>
<feature type="topological domain" description="Cytoplasmic" evidence="1">
    <location>
        <begin position="141"/>
        <end position="160"/>
    </location>
</feature>
<feature type="transmembrane region" description="Helical; Name=4" evidence="1">
    <location>
        <begin position="161"/>
        <end position="181"/>
    </location>
</feature>
<feature type="topological domain" description="Extracellular" evidence="1">
    <location>
        <begin position="182"/>
        <end position="209"/>
    </location>
</feature>
<feature type="transmembrane region" description="Helical; Name=5" evidence="1">
    <location>
        <begin position="210"/>
        <end position="230"/>
    </location>
</feature>
<feature type="topological domain" description="Cytoplasmic" evidence="1">
    <location>
        <begin position="231"/>
        <end position="269"/>
    </location>
</feature>
<feature type="transmembrane region" description="Helical; Name=6" evidence="1">
    <location>
        <begin position="270"/>
        <end position="290"/>
    </location>
</feature>
<feature type="topological domain" description="Extracellular" evidence="1">
    <location>
        <begin position="291"/>
        <end position="305"/>
    </location>
</feature>
<feature type="transmembrane region" description="Helical; Name=7" evidence="1">
    <location>
        <begin position="306"/>
        <end position="328"/>
    </location>
</feature>
<feature type="topological domain" description="Cytoplasmic" evidence="1">
    <location>
        <begin position="329"/>
        <end position="377"/>
    </location>
</feature>
<feature type="glycosylation site" description="N-linked (GlcNAc...) asparagine" evidence="1">
    <location>
        <position position="9"/>
    </location>
</feature>
<feature type="glycosylation site" description="N-linked (GlcNAc...) asparagine" evidence="1">
    <location>
        <position position="17"/>
    </location>
</feature>
<feature type="glycosylation site" description="N-linked (GlcNAc...) asparagine" evidence="1">
    <location>
        <position position="22"/>
    </location>
</feature>
<feature type="disulfide bond" evidence="2">
    <location>
        <begin position="118"/>
        <end position="198"/>
    </location>
</feature>